<sequence>MATLDKFLSIKENDEKTKKKESKKKSSKSNKTSESLVSHDHFELTPEFENQLWKVADKLRKKMEVHQYKYVVLGLIFLRALTCRFYERRKEIEEELSNPNSELYTEDPELRKMILEDEDFYLSEGVLYLPKETRWDYFVENVMSPNIGEIIDTAIEILEEKYPDRLKDVIPKIYAQSPLDNHDYSYLINKFSEISFGKEHRVKDVFGRIYEYFLGKFTEVEGKLGGKFYTPRSLTKLIVDVLDVKGGSIFDPACGSGGFFVSALEKLEREGIDINELSIYGQDSDPMAYRLTKMNLIIRGAEGDIRIDDSYHDDKFMDMTFDYVVANPPFNDSEWDANRIKPDDPRLRIGNKKVPVPPNGNANYMWILHFIYHTAPNGKAGFVMANGALSAGNVEGEIRKAIIENDLVYGIVACPPKLFYNVSLPVSLWFIRKEKPDYMKGKVLFINAKNLYKQISRRQNILTEEHIKKIVDKFRMFESGEDEDKINELGFAKVATIDEIAKNGYVLTPGRYVGVKIEDDGIPFEVKMKEYSEELKKLLDEEEKLRNKVKEILDALGF</sequence>
<evidence type="ECO:0000250" key="1">
    <source>
        <dbReference type="UniProtKB" id="P08957"/>
    </source>
</evidence>
<evidence type="ECO:0000250" key="2">
    <source>
        <dbReference type="UniProtKB" id="Q89Z59"/>
    </source>
</evidence>
<evidence type="ECO:0000256" key="3">
    <source>
        <dbReference type="SAM" id="MobiDB-lite"/>
    </source>
</evidence>
<evidence type="ECO:0000303" key="4">
    <source>
    </source>
</evidence>
<evidence type="ECO:0000305" key="5"/>
<geneLocation type="plasmid">
    <name>large ECE</name>
</geneLocation>
<protein>
    <recommendedName>
        <fullName>Type I restriction enzyme MjaIX methylase subunit</fullName>
        <shortName>M protein</shortName>
        <ecNumber evidence="1">2.1.1.72</ecNumber>
    </recommendedName>
    <alternativeName>
        <fullName evidence="4">Type I methyltransferase M.MjaIX</fullName>
        <shortName evidence="4">M.MjaIX</shortName>
    </alternativeName>
</protein>
<dbReference type="EC" id="2.1.1.72" evidence="1"/>
<dbReference type="EMBL" id="L77118">
    <property type="protein sequence ID" value="AAC37111.1"/>
    <property type="molecule type" value="Genomic_DNA"/>
</dbReference>
<dbReference type="PIR" id="A64515">
    <property type="entry name" value="A64515"/>
</dbReference>
<dbReference type="RefSeq" id="WP_010890090.1">
    <property type="nucleotide sequence ID" value="NC_001732.1"/>
</dbReference>
<dbReference type="SMR" id="Q60297"/>
<dbReference type="REBASE" id="155513">
    <property type="entry name" value="M.VscVS05ORF3158P"/>
</dbReference>
<dbReference type="REBASE" id="188606">
    <property type="entry name" value="M.AsoACEORF2384P"/>
</dbReference>
<dbReference type="REBASE" id="191852">
    <property type="entry name" value="M.Apa1447ORF2799P"/>
</dbReference>
<dbReference type="REBASE" id="191856">
    <property type="entry name" value="M.Apa1447ORF3031P"/>
</dbReference>
<dbReference type="REBASE" id="191865">
    <property type="entry name" value="M.Apa1342ORF2767P"/>
</dbReference>
<dbReference type="REBASE" id="191868">
    <property type="entry name" value="M.Apa1342ORF2943P"/>
</dbReference>
<dbReference type="REBASE" id="191872">
    <property type="entry name" value="M.Apa1342ORF3157P"/>
</dbReference>
<dbReference type="REBASE" id="191885">
    <property type="entry name" value="M.Apa1468ORF2991P"/>
</dbReference>
<dbReference type="REBASE" id="191888">
    <property type="entry name" value="M.Apa1468ORF3072P"/>
</dbReference>
<dbReference type="REBASE" id="204130">
    <property type="entry name" value="M.Keu1446ORF147P"/>
</dbReference>
<dbReference type="REBASE" id="211764">
    <property type="entry name" value="M.RspL182ORF2217P"/>
</dbReference>
<dbReference type="REBASE" id="3910">
    <property type="entry name" value="M.MjaIX"/>
</dbReference>
<dbReference type="REBASE" id="618873">
    <property type="entry name" value="M.LspCC1II"/>
</dbReference>
<dbReference type="PaxDb" id="243232-MJ_ECL42"/>
<dbReference type="DNASU" id="1450824"/>
<dbReference type="EnsemblBacteria" id="AAC37111">
    <property type="protein sequence ID" value="AAC37111"/>
    <property type="gene ID" value="MJ_ECL42"/>
</dbReference>
<dbReference type="GeneID" id="1450824"/>
<dbReference type="KEGG" id="mja:MJ_ECL42"/>
<dbReference type="eggNOG" id="arCOG02632">
    <property type="taxonomic scope" value="Archaea"/>
</dbReference>
<dbReference type="HOGENOM" id="CLU_013049_4_1_2"/>
<dbReference type="InParanoid" id="Q60297"/>
<dbReference type="OrthoDB" id="45790at2157"/>
<dbReference type="PhylomeDB" id="Q60297"/>
<dbReference type="PRO" id="PR:Q60297"/>
<dbReference type="Proteomes" id="UP000000805">
    <property type="component" value="Plasmid pDSM2661_1"/>
</dbReference>
<dbReference type="GO" id="GO:0003677">
    <property type="term" value="F:DNA binding"/>
    <property type="evidence" value="ECO:0007669"/>
    <property type="project" value="UniProtKB-KW"/>
</dbReference>
<dbReference type="GO" id="GO:0008170">
    <property type="term" value="F:N-methyltransferase activity"/>
    <property type="evidence" value="ECO:0007669"/>
    <property type="project" value="InterPro"/>
</dbReference>
<dbReference type="GO" id="GO:0009007">
    <property type="term" value="F:site-specific DNA-methyltransferase (adenine-specific) activity"/>
    <property type="evidence" value="ECO:0007669"/>
    <property type="project" value="UniProtKB-EC"/>
</dbReference>
<dbReference type="GO" id="GO:0009307">
    <property type="term" value="P:DNA restriction-modification system"/>
    <property type="evidence" value="ECO:0007669"/>
    <property type="project" value="UniProtKB-KW"/>
</dbReference>
<dbReference type="GO" id="GO:0032259">
    <property type="term" value="P:methylation"/>
    <property type="evidence" value="ECO:0007669"/>
    <property type="project" value="UniProtKB-KW"/>
</dbReference>
<dbReference type="CDD" id="cd02440">
    <property type="entry name" value="AdoMet_MTases"/>
    <property type="match status" value="1"/>
</dbReference>
<dbReference type="Gene3D" id="1.20.1260.30">
    <property type="match status" value="1"/>
</dbReference>
<dbReference type="Gene3D" id="3.40.50.150">
    <property type="entry name" value="Vaccinia Virus protein VP39"/>
    <property type="match status" value="1"/>
</dbReference>
<dbReference type="InterPro" id="IPR022749">
    <property type="entry name" value="D12N6_MeTrfase_N"/>
</dbReference>
<dbReference type="InterPro" id="IPR003356">
    <property type="entry name" value="DNA_methylase_A-5"/>
</dbReference>
<dbReference type="InterPro" id="IPR002052">
    <property type="entry name" value="DNA_methylase_N6_adenine_CS"/>
</dbReference>
<dbReference type="InterPro" id="IPR029063">
    <property type="entry name" value="SAM-dependent_MTases_sf"/>
</dbReference>
<dbReference type="InterPro" id="IPR038333">
    <property type="entry name" value="T1MK-like_N_sf"/>
</dbReference>
<dbReference type="InterPro" id="IPR052916">
    <property type="entry name" value="Type-I_RE_MTase_Subunit"/>
</dbReference>
<dbReference type="PANTHER" id="PTHR42998:SF1">
    <property type="entry name" value="TYPE I RESTRICTION ENZYME HINDI METHYLASE SUBUNIT"/>
    <property type="match status" value="1"/>
</dbReference>
<dbReference type="PANTHER" id="PTHR42998">
    <property type="entry name" value="TYPE I RESTRICTION ENZYME HINDVIIP M PROTEIN-RELATED"/>
    <property type="match status" value="1"/>
</dbReference>
<dbReference type="Pfam" id="PF12161">
    <property type="entry name" value="HsdM_N"/>
    <property type="match status" value="1"/>
</dbReference>
<dbReference type="Pfam" id="PF02384">
    <property type="entry name" value="N6_Mtase"/>
    <property type="match status" value="1"/>
</dbReference>
<dbReference type="PRINTS" id="PR00507">
    <property type="entry name" value="N12N6MTFRASE"/>
</dbReference>
<dbReference type="SUPFAM" id="SSF53335">
    <property type="entry name" value="S-adenosyl-L-methionine-dependent methyltransferases"/>
    <property type="match status" value="1"/>
</dbReference>
<dbReference type="PROSITE" id="PS00092">
    <property type="entry name" value="N6_MTASE"/>
    <property type="match status" value="1"/>
</dbReference>
<organism>
    <name type="scientific">Methanocaldococcus jannaschii (strain ATCC 43067 / DSM 2661 / JAL-1 / JCM 10045 / NBRC 100440)</name>
    <name type="common">Methanococcus jannaschii</name>
    <dbReference type="NCBI Taxonomy" id="243232"/>
    <lineage>
        <taxon>Archaea</taxon>
        <taxon>Methanobacteriati</taxon>
        <taxon>Methanobacteriota</taxon>
        <taxon>Methanomada group</taxon>
        <taxon>Methanococci</taxon>
        <taxon>Methanococcales</taxon>
        <taxon>Methanocaldococcaceae</taxon>
        <taxon>Methanocaldococcus</taxon>
    </lineage>
</organism>
<gene>
    <name type="ordered locus">MJECL42</name>
</gene>
<proteinExistence type="inferred from homology"/>
<comment type="function">
    <text evidence="1 4">The subtype gamma methyltransferase (M) subunit of a type I restriction enzyme. The M and S subunits together form a methyltransferase (MTase) that methylates A-3 on the top and A-2 on the bottom strand of the sequence 5'-CCAN(5)GTR-3'. In the presence of the R subunit the complex can also act as an endonuclease, binding to the same target sequence but cutting the DNA some distance from this site. Whether the DNA is cut or modified depends on the methylation state of the target sequence. When the target site is unmodified, the DNA is cut. When the target site is hemimethylated, the complex acts as a maintenance MTase modifying the DNA so that both strands become methylated. After locating a non-methylated recognition site, the enzyme complex serves as a molecular motor that translocates DNA in an ATP-dependent manner until a collision occurs that triggers cleavage.</text>
</comment>
<comment type="catalytic activity">
    <reaction evidence="1">
        <text>a 2'-deoxyadenosine in DNA + S-adenosyl-L-methionine = an N(6)-methyl-2'-deoxyadenosine in DNA + S-adenosyl-L-homocysteine + H(+)</text>
        <dbReference type="Rhea" id="RHEA:15197"/>
        <dbReference type="Rhea" id="RHEA-COMP:12418"/>
        <dbReference type="Rhea" id="RHEA-COMP:12419"/>
        <dbReference type="ChEBI" id="CHEBI:15378"/>
        <dbReference type="ChEBI" id="CHEBI:57856"/>
        <dbReference type="ChEBI" id="CHEBI:59789"/>
        <dbReference type="ChEBI" id="CHEBI:90615"/>
        <dbReference type="ChEBI" id="CHEBI:90616"/>
        <dbReference type="EC" id="2.1.1.72"/>
    </reaction>
</comment>
<comment type="subunit">
    <text evidence="1">The type I restriction/modification system is composed of three polypeptides R, M and S.</text>
</comment>
<comment type="miscellaneous">
    <text evidence="1">Type I restriction and modification enzymes are complex, multifunctional systems which require ATP, S-adenosyl methionine and Mg(2+) as cofactors and, in addition to their endonucleolytic and methylase activities, are potent DNA-dependent ATPases.</text>
</comment>
<comment type="similarity">
    <text evidence="5">Belongs to the N(4)/N(6)-methyltransferase family.</text>
</comment>
<keyword id="KW-0238">DNA-binding</keyword>
<keyword id="KW-0489">Methyltransferase</keyword>
<keyword id="KW-0614">Plasmid</keyword>
<keyword id="KW-1185">Reference proteome</keyword>
<keyword id="KW-0680">Restriction system</keyword>
<keyword id="KW-0949">S-adenosyl-L-methionine</keyword>
<keyword id="KW-0808">Transferase</keyword>
<name>T1MH_METJA</name>
<reference key="1">
    <citation type="journal article" date="1996" name="Science">
        <title>Complete genome sequence of the methanogenic archaeon, Methanococcus jannaschii.</title>
        <authorList>
            <person name="Bult C.J."/>
            <person name="White O."/>
            <person name="Olsen G.J."/>
            <person name="Zhou L."/>
            <person name="Fleischmann R.D."/>
            <person name="Sutton G.G."/>
            <person name="Blake J.A."/>
            <person name="FitzGerald L.M."/>
            <person name="Clayton R.A."/>
            <person name="Gocayne J.D."/>
            <person name="Kerlavage A.R."/>
            <person name="Dougherty B.A."/>
            <person name="Tomb J.-F."/>
            <person name="Adams M.D."/>
            <person name="Reich C.I."/>
            <person name="Overbeek R."/>
            <person name="Kirkness E.F."/>
            <person name="Weinstock K.G."/>
            <person name="Merrick J.M."/>
            <person name="Glodek A."/>
            <person name="Scott J.L."/>
            <person name="Geoghagen N.S.M."/>
            <person name="Weidman J.F."/>
            <person name="Fuhrmann J.L."/>
            <person name="Nguyen D."/>
            <person name="Utterback T.R."/>
            <person name="Kelley J.M."/>
            <person name="Peterson J.D."/>
            <person name="Sadow P.W."/>
            <person name="Hanna M.C."/>
            <person name="Cotton M.D."/>
            <person name="Roberts K.M."/>
            <person name="Hurst M.A."/>
            <person name="Kaine B.P."/>
            <person name="Borodovsky M."/>
            <person name="Klenk H.-P."/>
            <person name="Fraser C.M."/>
            <person name="Smith H.O."/>
            <person name="Woese C.R."/>
            <person name="Venter J.C."/>
        </authorList>
    </citation>
    <scope>NUCLEOTIDE SEQUENCE [LARGE SCALE GENOMIC DNA]</scope>
    <source>
        <strain>ATCC 43067 / DSM 2661 / JAL-1 / JCM 10045 / NBRC 100440</strain>
    </source>
</reference>
<reference key="2">
    <citation type="journal article" date="2003" name="Nucleic Acids Res.">
        <title>A nomenclature for restriction enzymes, DNA methyltransferases, homing endonucleases and their genes.</title>
        <authorList>
            <person name="Roberts R.J."/>
            <person name="Belfort M."/>
            <person name="Bestor T."/>
            <person name="Bhagwat A.S."/>
            <person name="Bickle T.A."/>
            <person name="Bitinaite J."/>
            <person name="Blumenthal R.M."/>
            <person name="Degtyarev S.K."/>
            <person name="Dryden D.T."/>
            <person name="Dybvig K."/>
            <person name="Firman K."/>
            <person name="Gromova E.S."/>
            <person name="Gumport R.I."/>
            <person name="Halford S.E."/>
            <person name="Hattman S."/>
            <person name="Heitman J."/>
            <person name="Hornby D.P."/>
            <person name="Janulaitis A."/>
            <person name="Jeltsch A."/>
            <person name="Josephsen J."/>
            <person name="Kiss A."/>
            <person name="Klaenhammer T.R."/>
            <person name="Kobayashi I."/>
            <person name="Kong H."/>
            <person name="Krueger D.H."/>
            <person name="Lacks S."/>
            <person name="Marinus M.G."/>
            <person name="Miyahara M."/>
            <person name="Morgan R.D."/>
            <person name="Murray N.E."/>
            <person name="Nagaraja V."/>
            <person name="Piekarowicz A."/>
            <person name="Pingoud A."/>
            <person name="Raleigh E."/>
            <person name="Rao D.N."/>
            <person name="Reich N."/>
            <person name="Repin V.E."/>
            <person name="Selker E.U."/>
            <person name="Shaw P.C."/>
            <person name="Stein D.C."/>
            <person name="Stoddard B.L."/>
            <person name="Szybalski W."/>
            <person name="Trautner T.A."/>
            <person name="Van Etten J.L."/>
            <person name="Vitor J.M."/>
            <person name="Wilson G.G."/>
            <person name="Xu S.Y."/>
        </authorList>
    </citation>
    <scope>NOMENCLATURE</scope>
    <scope>SUBTYPE</scope>
</reference>
<accession>Q60297</accession>
<feature type="chain" id="PRO_0000088029" description="Type I restriction enzyme MjaIX methylase subunit">
    <location>
        <begin position="1"/>
        <end position="558"/>
    </location>
</feature>
<feature type="region of interest" description="Disordered" evidence="3">
    <location>
        <begin position="1"/>
        <end position="37"/>
    </location>
</feature>
<feature type="compositionally biased region" description="Basic and acidic residues" evidence="3">
    <location>
        <begin position="8"/>
        <end position="18"/>
    </location>
</feature>
<feature type="compositionally biased region" description="Basic residues" evidence="3">
    <location>
        <begin position="19"/>
        <end position="28"/>
    </location>
</feature>
<feature type="binding site" evidence="2">
    <location>
        <begin position="227"/>
        <end position="232"/>
    </location>
    <ligand>
        <name>S-adenosyl-L-methionine</name>
        <dbReference type="ChEBI" id="CHEBI:59789"/>
    </ligand>
</feature>
<feature type="binding site" evidence="2">
    <location>
        <begin position="256"/>
        <end position="258"/>
    </location>
    <ligand>
        <name>S-adenosyl-L-methionine</name>
        <dbReference type="ChEBI" id="CHEBI:59789"/>
    </ligand>
</feature>
<feature type="binding site" evidence="2">
    <location>
        <position position="283"/>
    </location>
    <ligand>
        <name>S-adenosyl-L-methionine</name>
        <dbReference type="ChEBI" id="CHEBI:59789"/>
    </ligand>
</feature>